<dbReference type="EMBL" id="AJ938182">
    <property type="protein sequence ID" value="CAI81801.1"/>
    <property type="molecule type" value="Genomic_DNA"/>
</dbReference>
<dbReference type="RefSeq" id="WP_000615921.1">
    <property type="nucleotide sequence ID" value="NC_007622.1"/>
</dbReference>
<dbReference type="PDB" id="6FXC">
    <property type="method" value="EM"/>
    <property type="resolution" value="6.76 A"/>
    <property type="chains" value="AI/BI=1-122"/>
</dbReference>
<dbReference type="PDBsum" id="6FXC"/>
<dbReference type="EMDB" id="EMD-0243"/>
<dbReference type="EMDB" id="EMD-3637"/>
<dbReference type="SMR" id="Q2YYK7"/>
<dbReference type="GeneID" id="98346552"/>
<dbReference type="KEGG" id="sab:SAB2112c"/>
<dbReference type="HOGENOM" id="CLU_095071_2_1_9"/>
<dbReference type="GO" id="GO:0022625">
    <property type="term" value="C:cytosolic large ribosomal subunit"/>
    <property type="evidence" value="ECO:0007669"/>
    <property type="project" value="TreeGrafter"/>
</dbReference>
<dbReference type="GO" id="GO:0070180">
    <property type="term" value="F:large ribosomal subunit rRNA binding"/>
    <property type="evidence" value="ECO:0007669"/>
    <property type="project" value="TreeGrafter"/>
</dbReference>
<dbReference type="GO" id="GO:0003735">
    <property type="term" value="F:structural constituent of ribosome"/>
    <property type="evidence" value="ECO:0007669"/>
    <property type="project" value="InterPro"/>
</dbReference>
<dbReference type="GO" id="GO:0006412">
    <property type="term" value="P:translation"/>
    <property type="evidence" value="ECO:0007669"/>
    <property type="project" value="UniProtKB-UniRule"/>
</dbReference>
<dbReference type="CDD" id="cd00337">
    <property type="entry name" value="Ribosomal_uL14"/>
    <property type="match status" value="1"/>
</dbReference>
<dbReference type="FunFam" id="2.40.150.20:FF:000001">
    <property type="entry name" value="50S ribosomal protein L14"/>
    <property type="match status" value="1"/>
</dbReference>
<dbReference type="Gene3D" id="2.40.150.20">
    <property type="entry name" value="Ribosomal protein L14"/>
    <property type="match status" value="1"/>
</dbReference>
<dbReference type="HAMAP" id="MF_01367">
    <property type="entry name" value="Ribosomal_uL14"/>
    <property type="match status" value="1"/>
</dbReference>
<dbReference type="InterPro" id="IPR000218">
    <property type="entry name" value="Ribosomal_uL14"/>
</dbReference>
<dbReference type="InterPro" id="IPR005745">
    <property type="entry name" value="Ribosomal_uL14_bac-type"/>
</dbReference>
<dbReference type="InterPro" id="IPR019972">
    <property type="entry name" value="Ribosomal_uL14_CS"/>
</dbReference>
<dbReference type="InterPro" id="IPR036853">
    <property type="entry name" value="Ribosomal_uL14_sf"/>
</dbReference>
<dbReference type="NCBIfam" id="TIGR01067">
    <property type="entry name" value="rplN_bact"/>
    <property type="match status" value="1"/>
</dbReference>
<dbReference type="PANTHER" id="PTHR11761">
    <property type="entry name" value="50S/60S RIBOSOMAL PROTEIN L14/L23"/>
    <property type="match status" value="1"/>
</dbReference>
<dbReference type="PANTHER" id="PTHR11761:SF3">
    <property type="entry name" value="LARGE RIBOSOMAL SUBUNIT PROTEIN UL14M"/>
    <property type="match status" value="1"/>
</dbReference>
<dbReference type="Pfam" id="PF00238">
    <property type="entry name" value="Ribosomal_L14"/>
    <property type="match status" value="1"/>
</dbReference>
<dbReference type="SMART" id="SM01374">
    <property type="entry name" value="Ribosomal_L14"/>
    <property type="match status" value="1"/>
</dbReference>
<dbReference type="SUPFAM" id="SSF50193">
    <property type="entry name" value="Ribosomal protein L14"/>
    <property type="match status" value="1"/>
</dbReference>
<dbReference type="PROSITE" id="PS00049">
    <property type="entry name" value="RIBOSOMAL_L14"/>
    <property type="match status" value="1"/>
</dbReference>
<proteinExistence type="evidence at protein level"/>
<organism>
    <name type="scientific">Staphylococcus aureus (strain bovine RF122 / ET3-1)</name>
    <dbReference type="NCBI Taxonomy" id="273036"/>
    <lineage>
        <taxon>Bacteria</taxon>
        <taxon>Bacillati</taxon>
        <taxon>Bacillota</taxon>
        <taxon>Bacilli</taxon>
        <taxon>Bacillales</taxon>
        <taxon>Staphylococcaceae</taxon>
        <taxon>Staphylococcus</taxon>
    </lineage>
</organism>
<reference key="1">
    <citation type="journal article" date="2007" name="PLoS ONE">
        <title>Molecular correlates of host specialization in Staphylococcus aureus.</title>
        <authorList>
            <person name="Herron-Olson L."/>
            <person name="Fitzgerald J.R."/>
            <person name="Musser J.M."/>
            <person name="Kapur V."/>
        </authorList>
    </citation>
    <scope>NUCLEOTIDE SEQUENCE [LARGE SCALE GENOMIC DNA]</scope>
    <source>
        <strain>bovine RF122 / ET3-1</strain>
    </source>
</reference>
<gene>
    <name evidence="1" type="primary">rplN</name>
    <name type="ordered locus">SAB2112c</name>
</gene>
<protein>
    <recommendedName>
        <fullName evidence="1">Large ribosomal subunit protein uL14</fullName>
    </recommendedName>
    <alternativeName>
        <fullName evidence="2">50S ribosomal protein L14</fullName>
    </alternativeName>
</protein>
<accession>Q2YYK7</accession>
<evidence type="ECO:0000255" key="1">
    <source>
        <dbReference type="HAMAP-Rule" id="MF_01367"/>
    </source>
</evidence>
<evidence type="ECO:0000305" key="2"/>
<feature type="chain" id="PRO_1000055708" description="Large ribosomal subunit protein uL14">
    <location>
        <begin position="1"/>
        <end position="122"/>
    </location>
</feature>
<sequence>MIQQETRLKVADNSGAREVLTIKVLGGSGRKTANIGDVIVCTVKNATPGGVVKKGDVVKAVIVRTKSGVRRNDGSYIKFDENACVIIRDDKGPRGTRIFGPVARELREGNFMKIVSLAPEVL</sequence>
<keyword id="KW-0002">3D-structure</keyword>
<keyword id="KW-0687">Ribonucleoprotein</keyword>
<keyword id="KW-0689">Ribosomal protein</keyword>
<keyword id="KW-0694">RNA-binding</keyword>
<keyword id="KW-0699">rRNA-binding</keyword>
<comment type="function">
    <text evidence="1">Binds to 23S rRNA. Forms part of two intersubunit bridges in the 70S ribosome.</text>
</comment>
<comment type="subunit">
    <text evidence="1">Part of the 50S ribosomal subunit. Forms a cluster with proteins L3 and L19. In the 70S ribosome, L14 and L19 interact and together make contacts with the 16S rRNA in bridges B5 and B8.</text>
</comment>
<comment type="similarity">
    <text evidence="1">Belongs to the universal ribosomal protein uL14 family.</text>
</comment>
<name>RL14_STAAB</name>